<name>PRHG_PENBI</name>
<protein>
    <recommendedName>
        <fullName evidence="5">MFS-type transporter prhG</fullName>
    </recommendedName>
    <alternativeName>
        <fullName evidence="5">Paraherquonin biosynthesis cluster protein G</fullName>
    </alternativeName>
</protein>
<reference key="1">
    <citation type="journal article" date="2016" name="J. Am. Chem. Soc.">
        <title>Discovery of key dioxygenases that diverged the paraherquonin and acetoxydehydroaustin pathways in Penicillium brasilianum.</title>
        <authorList>
            <person name="Matsuda Y."/>
            <person name="Iwabuchi T."/>
            <person name="Fujimoto T."/>
            <person name="Awakawa T."/>
            <person name="Nakashima Y."/>
            <person name="Mori T."/>
            <person name="Zhang H."/>
            <person name="Hayashi F."/>
            <person name="Abe I."/>
        </authorList>
    </citation>
    <scope>NUCLEOTIDE SEQUENCE [GENOMIC DNA]</scope>
    <scope>FUNCTION</scope>
    <scope>PATHWAY</scope>
    <source>
        <strain>ATCC 22354 / NBRC 6234 / CBS 338.59 / FRR 3454 / IMI 68220</strain>
    </source>
</reference>
<proteinExistence type="inferred from homology"/>
<organism>
    <name type="scientific">Penicillium brasilianum</name>
    <dbReference type="NCBI Taxonomy" id="104259"/>
    <lineage>
        <taxon>Eukaryota</taxon>
        <taxon>Fungi</taxon>
        <taxon>Dikarya</taxon>
        <taxon>Ascomycota</taxon>
        <taxon>Pezizomycotina</taxon>
        <taxon>Eurotiomycetes</taxon>
        <taxon>Eurotiomycetidae</taxon>
        <taxon>Eurotiales</taxon>
        <taxon>Aspergillaceae</taxon>
        <taxon>Penicillium</taxon>
    </lineage>
</organism>
<dbReference type="EMBL" id="LC127182">
    <property type="protein sequence ID" value="BAV69308.1"/>
    <property type="molecule type" value="Genomic_DNA"/>
</dbReference>
<dbReference type="SMR" id="A0A1E1FFK8"/>
<dbReference type="GlyCosmos" id="A0A1E1FFK8">
    <property type="glycosylation" value="1 site, No reported glycans"/>
</dbReference>
<dbReference type="GO" id="GO:0005886">
    <property type="term" value="C:plasma membrane"/>
    <property type="evidence" value="ECO:0007669"/>
    <property type="project" value="TreeGrafter"/>
</dbReference>
<dbReference type="GO" id="GO:0022857">
    <property type="term" value="F:transmembrane transporter activity"/>
    <property type="evidence" value="ECO:0007669"/>
    <property type="project" value="InterPro"/>
</dbReference>
<dbReference type="CDD" id="cd17502">
    <property type="entry name" value="MFS_Azr1_MDR_like"/>
    <property type="match status" value="1"/>
</dbReference>
<dbReference type="FunFam" id="1.20.1250.20:FF:000196">
    <property type="entry name" value="MFS toxin efflux pump (AflT)"/>
    <property type="match status" value="1"/>
</dbReference>
<dbReference type="FunFam" id="1.20.1720.10:FF:000012">
    <property type="entry name" value="MFS toxin efflux pump (AflT)"/>
    <property type="match status" value="1"/>
</dbReference>
<dbReference type="Gene3D" id="1.20.1250.20">
    <property type="entry name" value="MFS general substrate transporter like domains"/>
    <property type="match status" value="1"/>
</dbReference>
<dbReference type="Gene3D" id="1.20.1720.10">
    <property type="entry name" value="Multidrug resistance protein D"/>
    <property type="match status" value="1"/>
</dbReference>
<dbReference type="InterPro" id="IPR011701">
    <property type="entry name" value="MFS"/>
</dbReference>
<dbReference type="InterPro" id="IPR020846">
    <property type="entry name" value="MFS_dom"/>
</dbReference>
<dbReference type="InterPro" id="IPR036259">
    <property type="entry name" value="MFS_trans_sf"/>
</dbReference>
<dbReference type="PANTHER" id="PTHR23501">
    <property type="entry name" value="MAJOR FACILITATOR SUPERFAMILY"/>
    <property type="match status" value="1"/>
</dbReference>
<dbReference type="PANTHER" id="PTHR23501:SF199">
    <property type="entry name" value="MFS EFFLUX TRANSPORTER INPD-RELATED"/>
    <property type="match status" value="1"/>
</dbReference>
<dbReference type="Pfam" id="PF07690">
    <property type="entry name" value="MFS_1"/>
    <property type="match status" value="1"/>
</dbReference>
<dbReference type="SUPFAM" id="SSF103473">
    <property type="entry name" value="MFS general substrate transporter"/>
    <property type="match status" value="1"/>
</dbReference>
<dbReference type="PROSITE" id="PS50850">
    <property type="entry name" value="MFS"/>
    <property type="match status" value="1"/>
</dbReference>
<evidence type="ECO:0000255" key="1"/>
<evidence type="ECO:0000255" key="2">
    <source>
        <dbReference type="PROSITE-ProRule" id="PRU00498"/>
    </source>
</evidence>
<evidence type="ECO:0000256" key="3">
    <source>
        <dbReference type="SAM" id="MobiDB-lite"/>
    </source>
</evidence>
<evidence type="ECO:0000269" key="4">
    <source>
    </source>
</evidence>
<evidence type="ECO:0000303" key="5">
    <source>
    </source>
</evidence>
<evidence type="ECO:0000305" key="6"/>
<comment type="function">
    <text evidence="4">MFS-type transporter; part of the gene cluster that mediates the biosynthesis of paraherquonin, a meroterpenoid with a unique, highly congested hexacyclic molecular architecture.</text>
</comment>
<comment type="subcellular location">
    <subcellularLocation>
        <location evidence="1">Membrane</location>
        <topology evidence="1">Multi-pass membrane protein</topology>
    </subcellularLocation>
</comment>
<comment type="similarity">
    <text evidence="6">Belongs to the major facilitator superfamily. TCR/Tet family.</text>
</comment>
<feature type="chain" id="PRO_0000449172" description="MFS-type transporter prhG">
    <location>
        <begin position="1"/>
        <end position="589"/>
    </location>
</feature>
<feature type="transmembrane region" description="Helical" evidence="1">
    <location>
        <begin position="84"/>
        <end position="104"/>
    </location>
</feature>
<feature type="transmembrane region" description="Helical" evidence="1">
    <location>
        <begin position="121"/>
        <end position="141"/>
    </location>
</feature>
<feature type="transmembrane region" description="Helical" evidence="1">
    <location>
        <begin position="151"/>
        <end position="171"/>
    </location>
</feature>
<feature type="transmembrane region" description="Helical" evidence="1">
    <location>
        <begin position="182"/>
        <end position="202"/>
    </location>
</feature>
<feature type="transmembrane region" description="Helical" evidence="1">
    <location>
        <begin position="212"/>
        <end position="232"/>
    </location>
</feature>
<feature type="transmembrane region" description="Helical" evidence="1">
    <location>
        <begin position="240"/>
        <end position="260"/>
    </location>
</feature>
<feature type="transmembrane region" description="Helical" evidence="1">
    <location>
        <begin position="285"/>
        <end position="305"/>
    </location>
</feature>
<feature type="transmembrane region" description="Helical" evidence="1">
    <location>
        <begin position="315"/>
        <end position="335"/>
    </location>
</feature>
<feature type="transmembrane region" description="Helical" evidence="1">
    <location>
        <begin position="352"/>
        <end position="372"/>
    </location>
</feature>
<feature type="transmembrane region" description="Helical" evidence="1">
    <location>
        <begin position="390"/>
        <end position="410"/>
    </location>
</feature>
<feature type="transmembrane region" description="Helical" evidence="1">
    <location>
        <begin position="419"/>
        <end position="439"/>
    </location>
</feature>
<feature type="transmembrane region" description="Helical" evidence="1">
    <location>
        <begin position="445"/>
        <end position="465"/>
    </location>
</feature>
<feature type="transmembrane region" description="Helical" evidence="1">
    <location>
        <begin position="479"/>
        <end position="499"/>
    </location>
</feature>
<feature type="transmembrane region" description="Helical" evidence="1">
    <location>
        <begin position="555"/>
        <end position="575"/>
    </location>
</feature>
<feature type="region of interest" description="Disordered" evidence="3">
    <location>
        <begin position="1"/>
        <end position="54"/>
    </location>
</feature>
<feature type="compositionally biased region" description="Basic and acidic residues" evidence="3">
    <location>
        <begin position="1"/>
        <end position="10"/>
    </location>
</feature>
<feature type="glycosylation site" description="N-linked (GlcNAc...) asparagine" evidence="2">
    <location>
        <position position="59"/>
    </location>
</feature>
<accession>A0A1E1FFK8</accession>
<sequence length="589" mass="62788">MITESREHLQSKPQNSESIIRLDTPDDRPSLECDSLPSGGHSSKVSGGPASIEGKDVKNVSELETCATKAQTPHDEVPISTSKIIAVVGGLVLAVFCMSLDSTILSTAIPNIVSQFHSQNEMGWYVSAYSLTLASFSLAFGKIYTFYSTKTVFLITLSLFEAGSLICGAAPNSLALIIGRAIAGIGGTGMYLGALLLVAEILPFDKIPITTALLGAMYGIAAVVGPLLGGAFTDYATWRWCFYINLPMGGLTFLFVFFFVKRGKDKKRTREANNIVARFLELDPIGVALMIPTLVCLLLALEWGGATYSWHSWRLIVLYVVGGCCALGFVGVQIWRQDTATIPPRLLKNRNILGIILFSFCLNGSFVVLAYYLPIWFQSIKGVTAIKSGIMNLPLILTMIICSMICSTLVTKLGYYTPFLYLAPIIASTGAGLLSTMHVNSGSPVWIGFQALFGIGLGCGGTLSIVAAQTALPPEDISTGTAIVTFTQTLAAAVFNFVAQNVFQNQVLSGLAQSAPGVSAAKLTKAGPTMLREVVPADTLPAVLEVYNTAITRAFYVSVGGAALAIFGSIPLQWLSVKDRKTQAVTAHA</sequence>
<gene>
    <name evidence="5" type="primary">prhG</name>
</gene>
<keyword id="KW-0325">Glycoprotein</keyword>
<keyword id="KW-0472">Membrane</keyword>
<keyword id="KW-0812">Transmembrane</keyword>
<keyword id="KW-1133">Transmembrane helix</keyword>
<keyword id="KW-0813">Transport</keyword>